<sequence length="141" mass="16241">MLNHDEKQLIKHAWEKVLGHQEDFGAEALERMFAVYPQTKTYFPHFDLHHDSEQIRHHGKKVVTALGDAVRHMDNLSEALSELSNLHAYNLRVDPVNFKLLSHCFQVVLAVHLADEYTPQVHVAYDKFLAAVSAVLAEKYR</sequence>
<name>HBAD_CHRPI</name>
<keyword id="KW-0903">Direct protein sequencing</keyword>
<keyword id="KW-0349">Heme</keyword>
<keyword id="KW-0408">Iron</keyword>
<keyword id="KW-0479">Metal-binding</keyword>
<keyword id="KW-0561">Oxygen transport</keyword>
<keyword id="KW-1185">Reference proteome</keyword>
<keyword id="KW-0813">Transport</keyword>
<proteinExistence type="evidence at protein level"/>
<accession>P02005</accession>
<dbReference type="PIR" id="A02332">
    <property type="entry name" value="HATTDP"/>
</dbReference>
<dbReference type="SMR" id="P02005"/>
<dbReference type="Ensembl" id="ENSCPBT00000044692.1">
    <property type="protein sequence ID" value="ENSCPBP00000038114.1"/>
    <property type="gene ID" value="ENSCPBG00000026396.1"/>
</dbReference>
<dbReference type="GeneID" id="101935124"/>
<dbReference type="KEGG" id="cpic:101935124"/>
<dbReference type="GeneTree" id="ENSGT00940000165231"/>
<dbReference type="OMA" id="ACHMGED"/>
<dbReference type="OrthoDB" id="8751793at2759"/>
<dbReference type="Proteomes" id="UP000694380">
    <property type="component" value="Unplaced"/>
</dbReference>
<dbReference type="GO" id="GO:0072562">
    <property type="term" value="C:blood microparticle"/>
    <property type="evidence" value="ECO:0007669"/>
    <property type="project" value="TreeGrafter"/>
</dbReference>
<dbReference type="GO" id="GO:0031838">
    <property type="term" value="C:haptoglobin-hemoglobin complex"/>
    <property type="evidence" value="ECO:0007669"/>
    <property type="project" value="TreeGrafter"/>
</dbReference>
<dbReference type="GO" id="GO:0005833">
    <property type="term" value="C:hemoglobin complex"/>
    <property type="evidence" value="ECO:0007669"/>
    <property type="project" value="InterPro"/>
</dbReference>
<dbReference type="GO" id="GO:0031720">
    <property type="term" value="F:haptoglobin binding"/>
    <property type="evidence" value="ECO:0007669"/>
    <property type="project" value="TreeGrafter"/>
</dbReference>
<dbReference type="GO" id="GO:0020037">
    <property type="term" value="F:heme binding"/>
    <property type="evidence" value="ECO:0007669"/>
    <property type="project" value="InterPro"/>
</dbReference>
<dbReference type="GO" id="GO:0046872">
    <property type="term" value="F:metal ion binding"/>
    <property type="evidence" value="ECO:0007669"/>
    <property type="project" value="UniProtKB-KW"/>
</dbReference>
<dbReference type="GO" id="GO:0043177">
    <property type="term" value="F:organic acid binding"/>
    <property type="evidence" value="ECO:0007669"/>
    <property type="project" value="TreeGrafter"/>
</dbReference>
<dbReference type="GO" id="GO:0019825">
    <property type="term" value="F:oxygen binding"/>
    <property type="evidence" value="ECO:0007669"/>
    <property type="project" value="InterPro"/>
</dbReference>
<dbReference type="GO" id="GO:0005344">
    <property type="term" value="F:oxygen carrier activity"/>
    <property type="evidence" value="ECO:0007669"/>
    <property type="project" value="UniProtKB-KW"/>
</dbReference>
<dbReference type="GO" id="GO:0004601">
    <property type="term" value="F:peroxidase activity"/>
    <property type="evidence" value="ECO:0007669"/>
    <property type="project" value="TreeGrafter"/>
</dbReference>
<dbReference type="GO" id="GO:0042744">
    <property type="term" value="P:hydrogen peroxide catabolic process"/>
    <property type="evidence" value="ECO:0007669"/>
    <property type="project" value="TreeGrafter"/>
</dbReference>
<dbReference type="CDD" id="cd08927">
    <property type="entry name" value="Hb-alpha-like"/>
    <property type="match status" value="1"/>
</dbReference>
<dbReference type="FunFam" id="1.10.490.10:FF:000002">
    <property type="entry name" value="Hemoglobin subunit alpha"/>
    <property type="match status" value="1"/>
</dbReference>
<dbReference type="Gene3D" id="1.10.490.10">
    <property type="entry name" value="Globins"/>
    <property type="match status" value="1"/>
</dbReference>
<dbReference type="InterPro" id="IPR000971">
    <property type="entry name" value="Globin"/>
</dbReference>
<dbReference type="InterPro" id="IPR009050">
    <property type="entry name" value="Globin-like_sf"/>
</dbReference>
<dbReference type="InterPro" id="IPR012292">
    <property type="entry name" value="Globin/Proto"/>
</dbReference>
<dbReference type="InterPro" id="IPR002338">
    <property type="entry name" value="Hemoglobin_a-typ"/>
</dbReference>
<dbReference type="InterPro" id="IPR050056">
    <property type="entry name" value="Hemoglobin_oxygen_transport"/>
</dbReference>
<dbReference type="PANTHER" id="PTHR11442">
    <property type="entry name" value="HEMOGLOBIN FAMILY MEMBER"/>
    <property type="match status" value="1"/>
</dbReference>
<dbReference type="PANTHER" id="PTHR11442:SF41">
    <property type="entry name" value="HEMOGLOBIN SUBUNIT ZETA"/>
    <property type="match status" value="1"/>
</dbReference>
<dbReference type="Pfam" id="PF00042">
    <property type="entry name" value="Globin"/>
    <property type="match status" value="1"/>
</dbReference>
<dbReference type="PRINTS" id="PR00612">
    <property type="entry name" value="ALPHAHAEM"/>
</dbReference>
<dbReference type="SUPFAM" id="SSF46458">
    <property type="entry name" value="Globin-like"/>
    <property type="match status" value="1"/>
</dbReference>
<dbReference type="PROSITE" id="PS01033">
    <property type="entry name" value="GLOBIN"/>
    <property type="match status" value="1"/>
</dbReference>
<evidence type="ECO:0000255" key="1">
    <source>
        <dbReference type="PROSITE-ProRule" id="PRU00238"/>
    </source>
</evidence>
<comment type="function">
    <text>Involved in oxygen transport from the lung to the various peripheral tissues.</text>
</comment>
<comment type="subunit">
    <text>Heterotetramer of two alpha-D chains and two beta chains.</text>
</comment>
<comment type="tissue specificity">
    <text>Red blood cells.</text>
</comment>
<comment type="developmental stage">
    <text>In reptiles, the alpha-D chain occurs in a minor hemoglobin component, called hemoglobin d, which is expressed in late embryonic and adult life.</text>
</comment>
<comment type="similarity">
    <text evidence="1">Belongs to the globin family.</text>
</comment>
<organism>
    <name type="scientific">Chrysemys picta bellii</name>
    <name type="common">Western painted turtle</name>
    <name type="synonym">Emys bellii</name>
    <dbReference type="NCBI Taxonomy" id="8478"/>
    <lineage>
        <taxon>Eukaryota</taxon>
        <taxon>Metazoa</taxon>
        <taxon>Chordata</taxon>
        <taxon>Craniata</taxon>
        <taxon>Vertebrata</taxon>
        <taxon>Euteleostomi</taxon>
        <taxon>Archelosauria</taxon>
        <taxon>Testudinata</taxon>
        <taxon>Testudines</taxon>
        <taxon>Cryptodira</taxon>
        <taxon>Durocryptodira</taxon>
        <taxon>Testudinoidea</taxon>
        <taxon>Emydidae</taxon>
        <taxon>Chrysemys</taxon>
    </lineage>
</organism>
<feature type="chain" id="PRO_0000052824" description="Hemoglobin subunit alpha-D">
    <location>
        <begin position="1"/>
        <end position="141"/>
    </location>
</feature>
<feature type="domain" description="Globin" evidence="1">
    <location>
        <begin position="1"/>
        <end position="141"/>
    </location>
</feature>
<feature type="binding site" description="distal binding residue">
    <location>
        <position position="58"/>
    </location>
    <ligand>
        <name>heme b</name>
        <dbReference type="ChEBI" id="CHEBI:60344"/>
    </ligand>
    <ligandPart>
        <name>Fe</name>
        <dbReference type="ChEBI" id="CHEBI:18248"/>
    </ligandPart>
</feature>
<feature type="binding site" description="proximal binding residue">
    <location>
        <position position="87"/>
    </location>
    <ligand>
        <name>heme b</name>
        <dbReference type="ChEBI" id="CHEBI:60344"/>
    </ligand>
    <ligandPart>
        <name>Fe</name>
        <dbReference type="ChEBI" id="CHEBI:18248"/>
    </ligandPart>
</feature>
<gene>
    <name type="primary">HBAD</name>
</gene>
<protein>
    <recommendedName>
        <fullName>Hemoglobin subunit alpha-D</fullName>
    </recommendedName>
    <alternativeName>
        <fullName>Alpha-D-globin</fullName>
    </alternativeName>
    <alternativeName>
        <fullName>Hemoglobin alpha-D chain</fullName>
    </alternativeName>
</protein>
<reference key="1">
    <citation type="journal article" date="1984" name="Hoppe-Seyler's Z. Physiol. Chem.">
        <title>Hemoglobins of reptiles. Expression of alpha-D-genes in the turtles, Chrysemys picta bellii and Phrynops hilarii (Testudines).</title>
        <authorList>
            <person name="Ruecknagel K.P."/>
            <person name="Reischl E."/>
            <person name="Braunitzer G."/>
        </authorList>
    </citation>
    <scope>PROTEIN SEQUENCE</scope>
</reference>
<reference key="2">
    <citation type="journal article" date="1988" name="Biol. Chem. Hoppe-Seyler">
        <title>Hemoglobins of reptiles. The primary structure of the major and minor hemoglobin component of adult Western painted turtle (Chrysemys picta bellii).</title>
        <authorList>
            <person name="Ruecknagel K.P."/>
            <person name="Braunitzer G."/>
        </authorList>
    </citation>
    <scope>PROTEIN SEQUENCE</scope>
</reference>